<name>GLUQ_NEIMA</name>
<sequence>MYTGRFAPSPTGLLHIGSLLTAAASYADARSNGGKWLVRMEDLDPPREMPGAANHILHTLEAFGFEWDGEVAYQSRRYALYEETLCRLQTAGLVYPCHCSRKDWQTGARRGADGFVYNGRCRNPQQRPAPQGKQPAWRIRVPDRVIGFSDGIVGGYAQNLAGDIGDFVLLRADGYWAYQLAVVADDAEQGVTHIVRGQDLLVSTPRQIYLQQCLDVPTPQYAHLPLLTNAQGQKWSKQTLAPALDLNRREQLLRQVFRYLNLPEAPEADRPAELLDWAVAHWDMDKVPKHAITTP</sequence>
<dbReference type="EC" id="6.1.1.-" evidence="1"/>
<dbReference type="EMBL" id="AL157959">
    <property type="protein sequence ID" value="CAM09235.1"/>
    <property type="molecule type" value="Genomic_DNA"/>
</dbReference>
<dbReference type="PIR" id="G81785">
    <property type="entry name" value="G81785"/>
</dbReference>
<dbReference type="SMR" id="Q9JST9"/>
<dbReference type="EnsemblBacteria" id="CAM09235">
    <property type="protein sequence ID" value="CAM09235"/>
    <property type="gene ID" value="NMA2138"/>
</dbReference>
<dbReference type="KEGG" id="nma:NMA2138"/>
<dbReference type="HOGENOM" id="CLU_015768_0_1_4"/>
<dbReference type="Proteomes" id="UP000000626">
    <property type="component" value="Chromosome"/>
</dbReference>
<dbReference type="GO" id="GO:0005829">
    <property type="term" value="C:cytosol"/>
    <property type="evidence" value="ECO:0007669"/>
    <property type="project" value="TreeGrafter"/>
</dbReference>
<dbReference type="GO" id="GO:0005524">
    <property type="term" value="F:ATP binding"/>
    <property type="evidence" value="ECO:0007669"/>
    <property type="project" value="UniProtKB-KW"/>
</dbReference>
<dbReference type="GO" id="GO:0004818">
    <property type="term" value="F:glutamate-tRNA ligase activity"/>
    <property type="evidence" value="ECO:0007669"/>
    <property type="project" value="TreeGrafter"/>
</dbReference>
<dbReference type="GO" id="GO:0008270">
    <property type="term" value="F:zinc ion binding"/>
    <property type="evidence" value="ECO:0007669"/>
    <property type="project" value="UniProtKB-UniRule"/>
</dbReference>
<dbReference type="GO" id="GO:0006424">
    <property type="term" value="P:glutamyl-tRNA aminoacylation"/>
    <property type="evidence" value="ECO:0007669"/>
    <property type="project" value="InterPro"/>
</dbReference>
<dbReference type="GO" id="GO:0006400">
    <property type="term" value="P:tRNA modification"/>
    <property type="evidence" value="ECO:0007669"/>
    <property type="project" value="InterPro"/>
</dbReference>
<dbReference type="FunFam" id="3.40.50.620:FF:000093">
    <property type="entry name" value="Glutamyl-Q tRNA(Asp) synthetase"/>
    <property type="match status" value="1"/>
</dbReference>
<dbReference type="Gene3D" id="3.40.50.620">
    <property type="entry name" value="HUPs"/>
    <property type="match status" value="1"/>
</dbReference>
<dbReference type="HAMAP" id="MF_01428">
    <property type="entry name" value="Glu_Q_tRNA_synth"/>
    <property type="match status" value="1"/>
</dbReference>
<dbReference type="InterPro" id="IPR022380">
    <property type="entry name" value="Glu-Q_tRNA(Asp)_Synthase"/>
</dbReference>
<dbReference type="InterPro" id="IPR000924">
    <property type="entry name" value="Glu/Gln-tRNA-synth"/>
</dbReference>
<dbReference type="InterPro" id="IPR020058">
    <property type="entry name" value="Glu/Gln-tRNA-synth_Ib_cat-dom"/>
</dbReference>
<dbReference type="InterPro" id="IPR049940">
    <property type="entry name" value="GluQ/Sye"/>
</dbReference>
<dbReference type="InterPro" id="IPR014729">
    <property type="entry name" value="Rossmann-like_a/b/a_fold"/>
</dbReference>
<dbReference type="NCBIfam" id="NF004314">
    <property type="entry name" value="PRK05710.1-3"/>
    <property type="match status" value="1"/>
</dbReference>
<dbReference type="NCBIfam" id="TIGR03838">
    <property type="entry name" value="queuosine_YadB"/>
    <property type="match status" value="1"/>
</dbReference>
<dbReference type="PANTHER" id="PTHR43311">
    <property type="entry name" value="GLUTAMATE--TRNA LIGASE"/>
    <property type="match status" value="1"/>
</dbReference>
<dbReference type="PANTHER" id="PTHR43311:SF1">
    <property type="entry name" value="GLUTAMYL-Q TRNA(ASP) SYNTHETASE"/>
    <property type="match status" value="1"/>
</dbReference>
<dbReference type="Pfam" id="PF00749">
    <property type="entry name" value="tRNA-synt_1c"/>
    <property type="match status" value="1"/>
</dbReference>
<dbReference type="PRINTS" id="PR00987">
    <property type="entry name" value="TRNASYNTHGLU"/>
</dbReference>
<dbReference type="SUPFAM" id="SSF52374">
    <property type="entry name" value="Nucleotidylyl transferase"/>
    <property type="match status" value="1"/>
</dbReference>
<feature type="chain" id="PRO_0000208307" description="Glutamyl-Q tRNA(Asp) synthetase">
    <location>
        <begin position="1"/>
        <end position="295"/>
    </location>
</feature>
<feature type="short sequence motif" description="'HIGH' region">
    <location>
        <begin position="8"/>
        <end position="18"/>
    </location>
</feature>
<feature type="short sequence motif" description="'KMSKS' region">
    <location>
        <begin position="234"/>
        <end position="238"/>
    </location>
</feature>
<feature type="binding site" evidence="1">
    <location>
        <begin position="5"/>
        <end position="9"/>
    </location>
    <ligand>
        <name>L-glutamate</name>
        <dbReference type="ChEBI" id="CHEBI:29985"/>
    </ligand>
</feature>
<feature type="binding site" evidence="1">
    <location>
        <position position="41"/>
    </location>
    <ligand>
        <name>L-glutamate</name>
        <dbReference type="ChEBI" id="CHEBI:29985"/>
    </ligand>
</feature>
<feature type="binding site" evidence="1">
    <location>
        <position position="97"/>
    </location>
    <ligand>
        <name>Zn(2+)</name>
        <dbReference type="ChEBI" id="CHEBI:29105"/>
    </ligand>
</feature>
<feature type="binding site" evidence="1">
    <location>
        <position position="99"/>
    </location>
    <ligand>
        <name>Zn(2+)</name>
        <dbReference type="ChEBI" id="CHEBI:29105"/>
    </ligand>
</feature>
<feature type="binding site" evidence="1">
    <location>
        <position position="117"/>
    </location>
    <ligand>
        <name>Zn(2+)</name>
        <dbReference type="ChEBI" id="CHEBI:29105"/>
    </ligand>
</feature>
<feature type="binding site" evidence="1">
    <location>
        <position position="121"/>
    </location>
    <ligand>
        <name>Zn(2+)</name>
        <dbReference type="ChEBI" id="CHEBI:29105"/>
    </ligand>
</feature>
<feature type="binding site" evidence="1">
    <location>
        <position position="178"/>
    </location>
    <ligand>
        <name>L-glutamate</name>
        <dbReference type="ChEBI" id="CHEBI:29985"/>
    </ligand>
</feature>
<feature type="binding site" evidence="1">
    <location>
        <position position="196"/>
    </location>
    <ligand>
        <name>L-glutamate</name>
        <dbReference type="ChEBI" id="CHEBI:29985"/>
    </ligand>
</feature>
<feature type="binding site" evidence="1">
    <location>
        <position position="237"/>
    </location>
    <ligand>
        <name>ATP</name>
        <dbReference type="ChEBI" id="CHEBI:30616"/>
    </ligand>
</feature>
<reference key="1">
    <citation type="journal article" date="2000" name="Nature">
        <title>Complete DNA sequence of a serogroup A strain of Neisseria meningitidis Z2491.</title>
        <authorList>
            <person name="Parkhill J."/>
            <person name="Achtman M."/>
            <person name="James K.D."/>
            <person name="Bentley S.D."/>
            <person name="Churcher C.M."/>
            <person name="Klee S.R."/>
            <person name="Morelli G."/>
            <person name="Basham D."/>
            <person name="Brown D."/>
            <person name="Chillingworth T."/>
            <person name="Davies R.M."/>
            <person name="Davis P."/>
            <person name="Devlin K."/>
            <person name="Feltwell T."/>
            <person name="Hamlin N."/>
            <person name="Holroyd S."/>
            <person name="Jagels K."/>
            <person name="Leather S."/>
            <person name="Moule S."/>
            <person name="Mungall K.L."/>
            <person name="Quail M.A."/>
            <person name="Rajandream M.A."/>
            <person name="Rutherford K.M."/>
            <person name="Simmonds M."/>
            <person name="Skelton J."/>
            <person name="Whitehead S."/>
            <person name="Spratt B.G."/>
            <person name="Barrell B.G."/>
        </authorList>
    </citation>
    <scope>NUCLEOTIDE SEQUENCE [LARGE SCALE GENOMIC DNA]</scope>
    <source>
        <strain>DSM 15465 / Z2491</strain>
    </source>
</reference>
<protein>
    <recommendedName>
        <fullName evidence="1">Glutamyl-Q tRNA(Asp) synthetase</fullName>
        <shortName evidence="1">Glu-Q-RSs</shortName>
        <ecNumber evidence="1">6.1.1.-</ecNumber>
    </recommendedName>
</protein>
<proteinExistence type="inferred from homology"/>
<accession>Q9JST9</accession>
<accession>A1ITW6</accession>
<evidence type="ECO:0000255" key="1">
    <source>
        <dbReference type="HAMAP-Rule" id="MF_01428"/>
    </source>
</evidence>
<organism>
    <name type="scientific">Neisseria meningitidis serogroup A / serotype 4A (strain DSM 15465 / Z2491)</name>
    <dbReference type="NCBI Taxonomy" id="122587"/>
    <lineage>
        <taxon>Bacteria</taxon>
        <taxon>Pseudomonadati</taxon>
        <taxon>Pseudomonadota</taxon>
        <taxon>Betaproteobacteria</taxon>
        <taxon>Neisseriales</taxon>
        <taxon>Neisseriaceae</taxon>
        <taxon>Neisseria</taxon>
    </lineage>
</organism>
<keyword id="KW-0030">Aminoacyl-tRNA synthetase</keyword>
<keyword id="KW-0067">ATP-binding</keyword>
<keyword id="KW-0436">Ligase</keyword>
<keyword id="KW-0479">Metal-binding</keyword>
<keyword id="KW-0547">Nucleotide-binding</keyword>
<keyword id="KW-0862">Zinc</keyword>
<comment type="function">
    <text evidence="1">Catalyzes the tRNA-independent activation of glutamate in presence of ATP and the subsequent transfer of glutamate onto a tRNA(Asp). Glutamate is transferred on the 2-amino-5-(4,5-dihydroxy-2-cyclopenten-1-yl) moiety of the queuosine in the wobble position of the QUC anticodon.</text>
</comment>
<comment type="cofactor">
    <cofactor evidence="1">
        <name>Zn(2+)</name>
        <dbReference type="ChEBI" id="CHEBI:29105"/>
    </cofactor>
    <text evidence="1">Binds 1 zinc ion per subunit.</text>
</comment>
<comment type="similarity">
    <text evidence="1">Belongs to the class-I aminoacyl-tRNA synthetase family. GluQ subfamily.</text>
</comment>
<gene>
    <name evidence="1" type="primary">gluQ</name>
    <name type="ordered locus">NMA2138</name>
</gene>